<protein>
    <recommendedName>
        <fullName evidence="1">Protease HtpX homolog</fullName>
        <ecNumber evidence="1">3.4.24.-</ecNumber>
    </recommendedName>
</protein>
<reference key="1">
    <citation type="journal article" date="2004" name="Proc. Natl. Acad. Sci. U.S.A.">
        <title>Genome sequence of Picrophilus torridus and its implications for life around pH 0.</title>
        <authorList>
            <person name="Fuetterer O."/>
            <person name="Angelov A."/>
            <person name="Liesegang H."/>
            <person name="Gottschalk G."/>
            <person name="Schleper C."/>
            <person name="Schepers B."/>
            <person name="Dock C."/>
            <person name="Antranikian G."/>
            <person name="Liebl W."/>
        </authorList>
    </citation>
    <scope>NUCLEOTIDE SEQUENCE [LARGE SCALE GENOMIC DNA]</scope>
    <source>
        <strain>ATCC 700027 / DSM 9790 / JCM 10055 / NBRC 100828 / KAW 2/3</strain>
    </source>
</reference>
<comment type="cofactor">
    <cofactor evidence="1">
        <name>Zn(2+)</name>
        <dbReference type="ChEBI" id="CHEBI:29105"/>
    </cofactor>
    <text evidence="1">Binds 1 zinc ion per subunit.</text>
</comment>
<comment type="subcellular location">
    <subcellularLocation>
        <location evidence="1">Cell membrane</location>
        <topology evidence="1">Multi-pass membrane protein</topology>
    </subcellularLocation>
</comment>
<comment type="similarity">
    <text evidence="1">Belongs to the peptidase M48B family.</text>
</comment>
<accession>Q6L2Q7</accession>
<feature type="chain" id="PRO_0000138922" description="Protease HtpX homolog">
    <location>
        <begin position="1"/>
        <end position="307"/>
    </location>
</feature>
<feature type="transmembrane region" description="Helical" evidence="1">
    <location>
        <begin position="10"/>
        <end position="30"/>
    </location>
</feature>
<feature type="transmembrane region" description="Helical" evidence="1">
    <location>
        <begin position="40"/>
        <end position="60"/>
    </location>
</feature>
<feature type="transmembrane region" description="Helical" evidence="1">
    <location>
        <begin position="156"/>
        <end position="176"/>
    </location>
</feature>
<feature type="transmembrane region" description="Helical" evidence="1">
    <location>
        <begin position="187"/>
        <end position="207"/>
    </location>
</feature>
<feature type="active site" evidence="1">
    <location>
        <position position="145"/>
    </location>
</feature>
<feature type="binding site" evidence="1">
    <location>
        <position position="144"/>
    </location>
    <ligand>
        <name>Zn(2+)</name>
        <dbReference type="ChEBI" id="CHEBI:29105"/>
        <note>catalytic</note>
    </ligand>
</feature>
<feature type="binding site" evidence="1">
    <location>
        <position position="148"/>
    </location>
    <ligand>
        <name>Zn(2+)</name>
        <dbReference type="ChEBI" id="CHEBI:29105"/>
        <note>catalytic</note>
    </ligand>
</feature>
<feature type="binding site" evidence="1">
    <location>
        <position position="213"/>
    </location>
    <ligand>
        <name>Zn(2+)</name>
        <dbReference type="ChEBI" id="CHEBI:29105"/>
        <note>catalytic</note>
    </ligand>
</feature>
<gene>
    <name evidence="1" type="primary">htpX</name>
    <name type="ordered locus">PTO0160</name>
</gene>
<keyword id="KW-1003">Cell membrane</keyword>
<keyword id="KW-0378">Hydrolase</keyword>
<keyword id="KW-0472">Membrane</keyword>
<keyword id="KW-0479">Metal-binding</keyword>
<keyword id="KW-0482">Metalloprotease</keyword>
<keyword id="KW-0645">Protease</keyword>
<keyword id="KW-0812">Transmembrane</keyword>
<keyword id="KW-1133">Transmembrane helix</keyword>
<keyword id="KW-0862">Zinc</keyword>
<name>HTPX_PICTO</name>
<organism>
    <name type="scientific">Picrophilus torridus (strain ATCC 700027 / DSM 9790 / JCM 10055 / NBRC 100828 / KAW 2/3)</name>
    <dbReference type="NCBI Taxonomy" id="1122961"/>
    <lineage>
        <taxon>Archaea</taxon>
        <taxon>Methanobacteriati</taxon>
        <taxon>Thermoplasmatota</taxon>
        <taxon>Thermoplasmata</taxon>
        <taxon>Thermoplasmatales</taxon>
        <taxon>Picrophilaceae</taxon>
        <taxon>Picrophilus</taxon>
    </lineage>
</organism>
<sequence>MDLYSIKLKVITILAGIGIALLFSLIAYGLLYYFYGLSGISIIYFLLIFVLFIDIIQWLVSPYIIGMTYRLQKVSPMSQYGYLIDIVHDAAEKNNIKEPEVYIAMRGSPNAFAYSSPLAGKRIAFTKSILDILNRDELEAVAGHELGHLKHHDVELLLAIGLIPTLIFYLGYSMIFSGFGRRNGGSFFLVAIILFILSSVFNIMILGVNRIRESYADVNSAMTIPNGAENLQNALAKIYSYSMPSKQTSNSTVNMLMFSDHIENDLGRDYRKLVEKWKNMKPPVSIFSDHPHPAKRIQILERYKNSF</sequence>
<proteinExistence type="inferred from homology"/>
<evidence type="ECO:0000255" key="1">
    <source>
        <dbReference type="HAMAP-Rule" id="MF_00188"/>
    </source>
</evidence>
<dbReference type="EC" id="3.4.24.-" evidence="1"/>
<dbReference type="EMBL" id="AE017261">
    <property type="protein sequence ID" value="AAT42745.1"/>
    <property type="molecule type" value="Genomic_DNA"/>
</dbReference>
<dbReference type="RefSeq" id="WP_011176961.1">
    <property type="nucleotide sequence ID" value="NC_005877.1"/>
</dbReference>
<dbReference type="FunCoup" id="Q6L2Q7">
    <property type="interactions" value="62"/>
</dbReference>
<dbReference type="STRING" id="263820.PTO0160"/>
<dbReference type="PaxDb" id="263820-PTO0160"/>
<dbReference type="GeneID" id="2844988"/>
<dbReference type="KEGG" id="pto:PTO0160"/>
<dbReference type="PATRIC" id="fig|263820.9.peg.176"/>
<dbReference type="eggNOG" id="arCOG01331">
    <property type="taxonomic scope" value="Archaea"/>
</dbReference>
<dbReference type="HOGENOM" id="CLU_042266_4_1_2"/>
<dbReference type="InParanoid" id="Q6L2Q7"/>
<dbReference type="OrthoDB" id="28389at2157"/>
<dbReference type="Proteomes" id="UP000000438">
    <property type="component" value="Chromosome"/>
</dbReference>
<dbReference type="GO" id="GO:0005886">
    <property type="term" value="C:plasma membrane"/>
    <property type="evidence" value="ECO:0007669"/>
    <property type="project" value="UniProtKB-SubCell"/>
</dbReference>
<dbReference type="GO" id="GO:0004222">
    <property type="term" value="F:metalloendopeptidase activity"/>
    <property type="evidence" value="ECO:0007669"/>
    <property type="project" value="UniProtKB-UniRule"/>
</dbReference>
<dbReference type="GO" id="GO:0008270">
    <property type="term" value="F:zinc ion binding"/>
    <property type="evidence" value="ECO:0007669"/>
    <property type="project" value="UniProtKB-UniRule"/>
</dbReference>
<dbReference type="GO" id="GO:0006508">
    <property type="term" value="P:proteolysis"/>
    <property type="evidence" value="ECO:0007669"/>
    <property type="project" value="UniProtKB-KW"/>
</dbReference>
<dbReference type="CDD" id="cd07338">
    <property type="entry name" value="M48B_HtpX_like"/>
    <property type="match status" value="1"/>
</dbReference>
<dbReference type="Gene3D" id="3.30.2010.10">
    <property type="entry name" value="Metalloproteases ('zincins'), catalytic domain"/>
    <property type="match status" value="1"/>
</dbReference>
<dbReference type="HAMAP" id="MF_00188">
    <property type="entry name" value="Pept_M48_protease_HtpX"/>
    <property type="match status" value="1"/>
</dbReference>
<dbReference type="InterPro" id="IPR050083">
    <property type="entry name" value="HtpX_protease"/>
</dbReference>
<dbReference type="InterPro" id="IPR022919">
    <property type="entry name" value="Pept_M48_protease_HtpX"/>
</dbReference>
<dbReference type="InterPro" id="IPR001915">
    <property type="entry name" value="Peptidase_M48"/>
</dbReference>
<dbReference type="NCBIfam" id="NF002322">
    <property type="entry name" value="PRK01265.1"/>
    <property type="match status" value="1"/>
</dbReference>
<dbReference type="PANTHER" id="PTHR43221">
    <property type="entry name" value="PROTEASE HTPX"/>
    <property type="match status" value="1"/>
</dbReference>
<dbReference type="PANTHER" id="PTHR43221:SF2">
    <property type="entry name" value="PROTEASE HTPX HOMOLOG"/>
    <property type="match status" value="1"/>
</dbReference>
<dbReference type="Pfam" id="PF01435">
    <property type="entry name" value="Peptidase_M48"/>
    <property type="match status" value="1"/>
</dbReference>